<sequence length="173" mass="18455">MKETIRIIGIDPGLRRTGWGIVESLGNSLHFIGSGTVTSNAEMDLASRLCQLHEGLSKVLHEFMPHEAAVEHTFVNKDATATLKLGQARGIALLAPAQAGLPVAEYAPNAVKKAVIGVGHGEKQQIHMMVKVLMPRASFDTSDAADALAIAICHAHHRQSIVSARRMQALLAG</sequence>
<accession>Q2YRD0</accession>
<dbReference type="EC" id="3.1.21.10" evidence="1"/>
<dbReference type="EMBL" id="AM040264">
    <property type="protein sequence ID" value="CAJ11672.1"/>
    <property type="molecule type" value="Genomic_DNA"/>
</dbReference>
<dbReference type="RefSeq" id="WP_002964793.1">
    <property type="nucleotide sequence ID" value="NZ_KN046823.1"/>
</dbReference>
<dbReference type="SMR" id="Q2YRD0"/>
<dbReference type="STRING" id="359391.BAB1_1716"/>
<dbReference type="GeneID" id="93017933"/>
<dbReference type="KEGG" id="bmf:BAB1_1716"/>
<dbReference type="PATRIC" id="fig|359391.11.peg.230"/>
<dbReference type="HOGENOM" id="CLU_091257_1_0_5"/>
<dbReference type="PhylomeDB" id="Q2YRD0"/>
<dbReference type="Proteomes" id="UP000002719">
    <property type="component" value="Chromosome I"/>
</dbReference>
<dbReference type="GO" id="GO:0005737">
    <property type="term" value="C:cytoplasm"/>
    <property type="evidence" value="ECO:0007669"/>
    <property type="project" value="UniProtKB-SubCell"/>
</dbReference>
<dbReference type="GO" id="GO:0048476">
    <property type="term" value="C:Holliday junction resolvase complex"/>
    <property type="evidence" value="ECO:0007669"/>
    <property type="project" value="UniProtKB-UniRule"/>
</dbReference>
<dbReference type="GO" id="GO:0008821">
    <property type="term" value="F:crossover junction DNA endonuclease activity"/>
    <property type="evidence" value="ECO:0007669"/>
    <property type="project" value="UniProtKB-UniRule"/>
</dbReference>
<dbReference type="GO" id="GO:0003677">
    <property type="term" value="F:DNA binding"/>
    <property type="evidence" value="ECO:0007669"/>
    <property type="project" value="UniProtKB-KW"/>
</dbReference>
<dbReference type="GO" id="GO:0000287">
    <property type="term" value="F:magnesium ion binding"/>
    <property type="evidence" value="ECO:0007669"/>
    <property type="project" value="UniProtKB-UniRule"/>
</dbReference>
<dbReference type="GO" id="GO:0006310">
    <property type="term" value="P:DNA recombination"/>
    <property type="evidence" value="ECO:0007669"/>
    <property type="project" value="UniProtKB-UniRule"/>
</dbReference>
<dbReference type="GO" id="GO:0006281">
    <property type="term" value="P:DNA repair"/>
    <property type="evidence" value="ECO:0007669"/>
    <property type="project" value="UniProtKB-UniRule"/>
</dbReference>
<dbReference type="CDD" id="cd16962">
    <property type="entry name" value="RuvC"/>
    <property type="match status" value="1"/>
</dbReference>
<dbReference type="FunFam" id="3.30.420.10:FF:000002">
    <property type="entry name" value="Crossover junction endodeoxyribonuclease RuvC"/>
    <property type="match status" value="1"/>
</dbReference>
<dbReference type="Gene3D" id="3.30.420.10">
    <property type="entry name" value="Ribonuclease H-like superfamily/Ribonuclease H"/>
    <property type="match status" value="1"/>
</dbReference>
<dbReference type="HAMAP" id="MF_00034">
    <property type="entry name" value="RuvC"/>
    <property type="match status" value="1"/>
</dbReference>
<dbReference type="InterPro" id="IPR012337">
    <property type="entry name" value="RNaseH-like_sf"/>
</dbReference>
<dbReference type="InterPro" id="IPR036397">
    <property type="entry name" value="RNaseH_sf"/>
</dbReference>
<dbReference type="InterPro" id="IPR020563">
    <property type="entry name" value="X-over_junc_endoDNase_Mg_BS"/>
</dbReference>
<dbReference type="InterPro" id="IPR002176">
    <property type="entry name" value="X-over_junc_endoDNase_RuvC"/>
</dbReference>
<dbReference type="NCBIfam" id="TIGR00228">
    <property type="entry name" value="ruvC"/>
    <property type="match status" value="1"/>
</dbReference>
<dbReference type="PANTHER" id="PTHR30194">
    <property type="entry name" value="CROSSOVER JUNCTION ENDODEOXYRIBONUCLEASE RUVC"/>
    <property type="match status" value="1"/>
</dbReference>
<dbReference type="PANTHER" id="PTHR30194:SF3">
    <property type="entry name" value="CROSSOVER JUNCTION ENDODEOXYRIBONUCLEASE RUVC"/>
    <property type="match status" value="1"/>
</dbReference>
<dbReference type="Pfam" id="PF02075">
    <property type="entry name" value="RuvC"/>
    <property type="match status" value="1"/>
</dbReference>
<dbReference type="PRINTS" id="PR00696">
    <property type="entry name" value="RSOLVASERUVC"/>
</dbReference>
<dbReference type="SUPFAM" id="SSF53098">
    <property type="entry name" value="Ribonuclease H-like"/>
    <property type="match status" value="1"/>
</dbReference>
<dbReference type="PROSITE" id="PS01321">
    <property type="entry name" value="RUVC"/>
    <property type="match status" value="1"/>
</dbReference>
<feature type="chain" id="PRO_1000002725" description="Crossover junction endodeoxyribonuclease RuvC">
    <location>
        <begin position="1"/>
        <end position="173"/>
    </location>
</feature>
<feature type="active site" evidence="1">
    <location>
        <position position="11"/>
    </location>
</feature>
<feature type="active site" evidence="1">
    <location>
        <position position="71"/>
    </location>
</feature>
<feature type="active site" evidence="1">
    <location>
        <position position="143"/>
    </location>
</feature>
<feature type="binding site" evidence="1">
    <location>
        <position position="11"/>
    </location>
    <ligand>
        <name>Mg(2+)</name>
        <dbReference type="ChEBI" id="CHEBI:18420"/>
        <label>1</label>
    </ligand>
</feature>
<feature type="binding site" evidence="1">
    <location>
        <position position="71"/>
    </location>
    <ligand>
        <name>Mg(2+)</name>
        <dbReference type="ChEBI" id="CHEBI:18420"/>
        <label>2</label>
    </ligand>
</feature>
<feature type="binding site" evidence="1">
    <location>
        <position position="143"/>
    </location>
    <ligand>
        <name>Mg(2+)</name>
        <dbReference type="ChEBI" id="CHEBI:18420"/>
        <label>1</label>
    </ligand>
</feature>
<evidence type="ECO:0000255" key="1">
    <source>
        <dbReference type="HAMAP-Rule" id="MF_00034"/>
    </source>
</evidence>
<gene>
    <name evidence="1" type="primary">ruvC</name>
    <name type="ordered locus">BAB1_1716</name>
</gene>
<keyword id="KW-0963">Cytoplasm</keyword>
<keyword id="KW-0227">DNA damage</keyword>
<keyword id="KW-0233">DNA recombination</keyword>
<keyword id="KW-0234">DNA repair</keyword>
<keyword id="KW-0238">DNA-binding</keyword>
<keyword id="KW-0255">Endonuclease</keyword>
<keyword id="KW-0378">Hydrolase</keyword>
<keyword id="KW-0460">Magnesium</keyword>
<keyword id="KW-0479">Metal-binding</keyword>
<keyword id="KW-0540">Nuclease</keyword>
<keyword id="KW-1185">Reference proteome</keyword>
<organism>
    <name type="scientific">Brucella abortus (strain 2308)</name>
    <dbReference type="NCBI Taxonomy" id="359391"/>
    <lineage>
        <taxon>Bacteria</taxon>
        <taxon>Pseudomonadati</taxon>
        <taxon>Pseudomonadota</taxon>
        <taxon>Alphaproteobacteria</taxon>
        <taxon>Hyphomicrobiales</taxon>
        <taxon>Brucellaceae</taxon>
        <taxon>Brucella/Ochrobactrum group</taxon>
        <taxon>Brucella</taxon>
    </lineage>
</organism>
<name>RUVC_BRUA2</name>
<proteinExistence type="inferred from homology"/>
<protein>
    <recommendedName>
        <fullName evidence="1">Crossover junction endodeoxyribonuclease RuvC</fullName>
        <ecNumber evidence="1">3.1.21.10</ecNumber>
    </recommendedName>
    <alternativeName>
        <fullName evidence="1">Holliday junction nuclease RuvC</fullName>
    </alternativeName>
    <alternativeName>
        <fullName evidence="1">Holliday junction resolvase RuvC</fullName>
    </alternativeName>
</protein>
<reference key="1">
    <citation type="journal article" date="2005" name="Infect. Immun.">
        <title>Whole-genome analyses of speciation events in pathogenic Brucellae.</title>
        <authorList>
            <person name="Chain P.S."/>
            <person name="Comerci D.J."/>
            <person name="Tolmasky M.E."/>
            <person name="Larimer F.W."/>
            <person name="Malfatti S.A."/>
            <person name="Vergez L.M."/>
            <person name="Aguero F."/>
            <person name="Land M.L."/>
            <person name="Ugalde R.A."/>
            <person name="Garcia E."/>
        </authorList>
    </citation>
    <scope>NUCLEOTIDE SEQUENCE [LARGE SCALE GENOMIC DNA]</scope>
    <source>
        <strain>2308</strain>
    </source>
</reference>
<comment type="function">
    <text evidence="1">The RuvA-RuvB-RuvC complex processes Holliday junction (HJ) DNA during genetic recombination and DNA repair. Endonuclease that resolves HJ intermediates. Cleaves cruciform DNA by making single-stranded nicks across the HJ at symmetrical positions within the homologous arms, yielding a 5'-phosphate and a 3'-hydroxyl group; requires a central core of homology in the junction. The consensus cleavage sequence is 5'-(A/T)TT(C/G)-3'. Cleavage occurs on the 3'-side of the TT dinucleotide at the point of strand exchange. HJ branch migration catalyzed by RuvA-RuvB allows RuvC to scan DNA until it finds its consensus sequence, where it cleaves and resolves the cruciform DNA.</text>
</comment>
<comment type="catalytic activity">
    <reaction evidence="1">
        <text>Endonucleolytic cleavage at a junction such as a reciprocal single-stranded crossover between two homologous DNA duplexes (Holliday junction).</text>
        <dbReference type="EC" id="3.1.21.10"/>
    </reaction>
</comment>
<comment type="cofactor">
    <cofactor evidence="1">
        <name>Mg(2+)</name>
        <dbReference type="ChEBI" id="CHEBI:18420"/>
    </cofactor>
    <text evidence="1">Binds 2 Mg(2+) ion per subunit.</text>
</comment>
<comment type="subunit">
    <text evidence="1">Homodimer which binds Holliday junction (HJ) DNA. The HJ becomes 2-fold symmetrical on binding to RuvC with unstacked arms; it has a different conformation from HJ DNA in complex with RuvA. In the full resolvosome a probable DNA-RuvA(4)-RuvB(12)-RuvC(2) complex forms which resolves the HJ.</text>
</comment>
<comment type="subcellular location">
    <subcellularLocation>
        <location evidence="1">Cytoplasm</location>
    </subcellularLocation>
</comment>
<comment type="similarity">
    <text evidence="1">Belongs to the RuvC family.</text>
</comment>